<sequence>MKRVILHCDLNNFYASVECLYHPELRDKPVAVCGSIEDRHGIVLAKNYAAKKYKVKTGETVWEAKNKCPGLVVVKANHSLYYKFSKYARQIYEYYTDRVESFGLDECWLDVSESTLLFGDGTKIANEIRERIKRELGVTVSVGVSYNKVFAKLGSDMKKPDAVTVITENDFKEKIWGLPVEALLYVGDSTKKKLNNMAVFTIGDLANCHSEFLVRQLGKWGYTLWSFANGYDTSPVAKNDCEIPIKSIGNSLTAPRDLTNNEDVRILIYVLSESVGERLRSHNLKGRTVQISIKDPELQTLERQAGLDIHTSITSEIAQKAYEIFLKSWNWSKNVRALGVRVTDLVESDTCTQISLFSDDIKRQKLEILDECVDRVRERFGYYSVRRGILLQDRGLNRI</sequence>
<proteinExistence type="inferred from homology"/>
<name>DPO4_ACET2</name>
<accession>A3DH61</accession>
<gene>
    <name evidence="1" type="primary">dinB</name>
    <name type="ordered locus">Cthe_2083</name>
</gene>
<comment type="function">
    <text evidence="1">Poorly processive, error-prone DNA polymerase involved in untargeted mutagenesis. Copies undamaged DNA at stalled replication forks, which arise in vivo from mismatched or misaligned primer ends. These misaligned primers can be extended by PolIV. Exhibits no 3'-5' exonuclease (proofreading) activity. May be involved in translesional synthesis, in conjunction with the beta clamp from PolIII.</text>
</comment>
<comment type="catalytic activity">
    <reaction evidence="1">
        <text>DNA(n) + a 2'-deoxyribonucleoside 5'-triphosphate = DNA(n+1) + diphosphate</text>
        <dbReference type="Rhea" id="RHEA:22508"/>
        <dbReference type="Rhea" id="RHEA-COMP:17339"/>
        <dbReference type="Rhea" id="RHEA-COMP:17340"/>
        <dbReference type="ChEBI" id="CHEBI:33019"/>
        <dbReference type="ChEBI" id="CHEBI:61560"/>
        <dbReference type="ChEBI" id="CHEBI:173112"/>
        <dbReference type="EC" id="2.7.7.7"/>
    </reaction>
</comment>
<comment type="cofactor">
    <cofactor evidence="1">
        <name>Mg(2+)</name>
        <dbReference type="ChEBI" id="CHEBI:18420"/>
    </cofactor>
    <text evidence="1">Binds 2 magnesium ions per subunit.</text>
</comment>
<comment type="subunit">
    <text evidence="1">Monomer.</text>
</comment>
<comment type="subcellular location">
    <subcellularLocation>
        <location evidence="1">Cytoplasm</location>
    </subcellularLocation>
</comment>
<comment type="similarity">
    <text evidence="1">Belongs to the DNA polymerase type-Y family.</text>
</comment>
<organism>
    <name type="scientific">Acetivibrio thermocellus (strain ATCC 27405 / DSM 1237 / JCM 9322 / NBRC 103400 / NCIMB 10682 / NRRL B-4536 / VPI 7372)</name>
    <name type="common">Clostridium thermocellum</name>
    <dbReference type="NCBI Taxonomy" id="203119"/>
    <lineage>
        <taxon>Bacteria</taxon>
        <taxon>Bacillati</taxon>
        <taxon>Bacillota</taxon>
        <taxon>Clostridia</taxon>
        <taxon>Eubacteriales</taxon>
        <taxon>Oscillospiraceae</taxon>
        <taxon>Acetivibrio</taxon>
    </lineage>
</organism>
<protein>
    <recommendedName>
        <fullName evidence="1">DNA polymerase IV</fullName>
        <shortName evidence="1">Pol IV</shortName>
        <ecNumber evidence="1">2.7.7.7</ecNumber>
    </recommendedName>
</protein>
<evidence type="ECO:0000255" key="1">
    <source>
        <dbReference type="HAMAP-Rule" id="MF_01113"/>
    </source>
</evidence>
<keyword id="KW-0963">Cytoplasm</keyword>
<keyword id="KW-0227">DNA damage</keyword>
<keyword id="KW-0234">DNA repair</keyword>
<keyword id="KW-0235">DNA replication</keyword>
<keyword id="KW-0238">DNA-binding</keyword>
<keyword id="KW-0239">DNA-directed DNA polymerase</keyword>
<keyword id="KW-0460">Magnesium</keyword>
<keyword id="KW-0479">Metal-binding</keyword>
<keyword id="KW-0515">Mutator protein</keyword>
<keyword id="KW-0548">Nucleotidyltransferase</keyword>
<keyword id="KW-1185">Reference proteome</keyword>
<keyword id="KW-0808">Transferase</keyword>
<dbReference type="EC" id="2.7.7.7" evidence="1"/>
<dbReference type="EMBL" id="CP000568">
    <property type="protein sequence ID" value="ABN53290.1"/>
    <property type="molecule type" value="Genomic_DNA"/>
</dbReference>
<dbReference type="RefSeq" id="WP_003514173.1">
    <property type="nucleotide sequence ID" value="NC_009012.1"/>
</dbReference>
<dbReference type="SMR" id="A3DH61"/>
<dbReference type="STRING" id="203119.Cthe_2083"/>
<dbReference type="GeneID" id="35802883"/>
<dbReference type="KEGG" id="cth:Cthe_2083"/>
<dbReference type="eggNOG" id="COG0389">
    <property type="taxonomic scope" value="Bacteria"/>
</dbReference>
<dbReference type="HOGENOM" id="CLU_012348_1_1_9"/>
<dbReference type="OrthoDB" id="9808813at2"/>
<dbReference type="Proteomes" id="UP000002145">
    <property type="component" value="Chromosome"/>
</dbReference>
<dbReference type="GO" id="GO:0005829">
    <property type="term" value="C:cytosol"/>
    <property type="evidence" value="ECO:0007669"/>
    <property type="project" value="TreeGrafter"/>
</dbReference>
<dbReference type="GO" id="GO:0003684">
    <property type="term" value="F:damaged DNA binding"/>
    <property type="evidence" value="ECO:0007669"/>
    <property type="project" value="InterPro"/>
</dbReference>
<dbReference type="GO" id="GO:0003887">
    <property type="term" value="F:DNA-directed DNA polymerase activity"/>
    <property type="evidence" value="ECO:0007669"/>
    <property type="project" value="UniProtKB-UniRule"/>
</dbReference>
<dbReference type="GO" id="GO:0000287">
    <property type="term" value="F:magnesium ion binding"/>
    <property type="evidence" value="ECO:0007669"/>
    <property type="project" value="UniProtKB-UniRule"/>
</dbReference>
<dbReference type="GO" id="GO:0006261">
    <property type="term" value="P:DNA-templated DNA replication"/>
    <property type="evidence" value="ECO:0007669"/>
    <property type="project" value="UniProtKB-UniRule"/>
</dbReference>
<dbReference type="GO" id="GO:0042276">
    <property type="term" value="P:error-prone translesion synthesis"/>
    <property type="evidence" value="ECO:0007669"/>
    <property type="project" value="TreeGrafter"/>
</dbReference>
<dbReference type="GO" id="GO:0009432">
    <property type="term" value="P:SOS response"/>
    <property type="evidence" value="ECO:0007669"/>
    <property type="project" value="TreeGrafter"/>
</dbReference>
<dbReference type="CDD" id="cd03586">
    <property type="entry name" value="PolY_Pol_IV_kappa"/>
    <property type="match status" value="1"/>
</dbReference>
<dbReference type="Gene3D" id="3.30.70.270">
    <property type="match status" value="1"/>
</dbReference>
<dbReference type="Gene3D" id="3.40.1170.60">
    <property type="match status" value="1"/>
</dbReference>
<dbReference type="Gene3D" id="1.10.150.20">
    <property type="entry name" value="5' to 3' exonuclease, C-terminal subdomain"/>
    <property type="match status" value="1"/>
</dbReference>
<dbReference type="Gene3D" id="3.30.1490.100">
    <property type="entry name" value="DNA polymerase, Y-family, little finger domain"/>
    <property type="match status" value="1"/>
</dbReference>
<dbReference type="HAMAP" id="MF_01113">
    <property type="entry name" value="DNApol_IV"/>
    <property type="match status" value="1"/>
</dbReference>
<dbReference type="InterPro" id="IPR043502">
    <property type="entry name" value="DNA/RNA_pol_sf"/>
</dbReference>
<dbReference type="InterPro" id="IPR036775">
    <property type="entry name" value="DNA_pol_Y-fam_lit_finger_sf"/>
</dbReference>
<dbReference type="InterPro" id="IPR017961">
    <property type="entry name" value="DNA_pol_Y-fam_little_finger"/>
</dbReference>
<dbReference type="InterPro" id="IPR050116">
    <property type="entry name" value="DNA_polymerase-Y"/>
</dbReference>
<dbReference type="InterPro" id="IPR022880">
    <property type="entry name" value="DNApol_IV"/>
</dbReference>
<dbReference type="InterPro" id="IPR043128">
    <property type="entry name" value="Rev_trsase/Diguanyl_cyclase"/>
</dbReference>
<dbReference type="InterPro" id="IPR001126">
    <property type="entry name" value="UmuC"/>
</dbReference>
<dbReference type="NCBIfam" id="NF002677">
    <property type="entry name" value="PRK02406.1"/>
    <property type="match status" value="1"/>
</dbReference>
<dbReference type="PANTHER" id="PTHR11076">
    <property type="entry name" value="DNA REPAIR POLYMERASE UMUC / TRANSFERASE FAMILY MEMBER"/>
    <property type="match status" value="1"/>
</dbReference>
<dbReference type="PANTHER" id="PTHR11076:SF35">
    <property type="entry name" value="DNA REPAIR PROTEIN HOMOLOG YOBH"/>
    <property type="match status" value="1"/>
</dbReference>
<dbReference type="Pfam" id="PF00817">
    <property type="entry name" value="IMS"/>
    <property type="match status" value="1"/>
</dbReference>
<dbReference type="Pfam" id="PF11799">
    <property type="entry name" value="IMS_C"/>
    <property type="match status" value="1"/>
</dbReference>
<dbReference type="SUPFAM" id="SSF56672">
    <property type="entry name" value="DNA/RNA polymerases"/>
    <property type="match status" value="1"/>
</dbReference>
<dbReference type="SUPFAM" id="SSF100879">
    <property type="entry name" value="Lesion bypass DNA polymerase (Y-family), little finger domain"/>
    <property type="match status" value="1"/>
</dbReference>
<dbReference type="PROSITE" id="PS50173">
    <property type="entry name" value="UMUC"/>
    <property type="match status" value="1"/>
</dbReference>
<reference key="1">
    <citation type="submission" date="2007-02" db="EMBL/GenBank/DDBJ databases">
        <title>Complete sequence of Clostridium thermocellum ATCC 27405.</title>
        <authorList>
            <consortium name="US DOE Joint Genome Institute"/>
            <person name="Copeland A."/>
            <person name="Lucas S."/>
            <person name="Lapidus A."/>
            <person name="Barry K."/>
            <person name="Detter J.C."/>
            <person name="Glavina del Rio T."/>
            <person name="Hammon N."/>
            <person name="Israni S."/>
            <person name="Dalin E."/>
            <person name="Tice H."/>
            <person name="Pitluck S."/>
            <person name="Chertkov O."/>
            <person name="Brettin T."/>
            <person name="Bruce D."/>
            <person name="Han C."/>
            <person name="Tapia R."/>
            <person name="Gilna P."/>
            <person name="Schmutz J."/>
            <person name="Larimer F."/>
            <person name="Land M."/>
            <person name="Hauser L."/>
            <person name="Kyrpides N."/>
            <person name="Mikhailova N."/>
            <person name="Wu J.H.D."/>
            <person name="Newcomb M."/>
            <person name="Richardson P."/>
        </authorList>
    </citation>
    <scope>NUCLEOTIDE SEQUENCE [LARGE SCALE GENOMIC DNA]</scope>
    <source>
        <strain>ATCC 27405 / DSM 1237 / JCM 9322 / NBRC 103400 / NCIMB 10682 / NRRL B-4536 / VPI 7372</strain>
    </source>
</reference>
<feature type="chain" id="PRO_1000084885" description="DNA polymerase IV">
    <location>
        <begin position="1"/>
        <end position="399"/>
    </location>
</feature>
<feature type="domain" description="UmuC" evidence="1">
    <location>
        <begin position="5"/>
        <end position="187"/>
    </location>
</feature>
<feature type="active site" evidence="1">
    <location>
        <position position="106"/>
    </location>
</feature>
<feature type="binding site" evidence="1">
    <location>
        <position position="9"/>
    </location>
    <ligand>
        <name>Mg(2+)</name>
        <dbReference type="ChEBI" id="CHEBI:18420"/>
    </ligand>
</feature>
<feature type="binding site" evidence="1">
    <location>
        <position position="105"/>
    </location>
    <ligand>
        <name>Mg(2+)</name>
        <dbReference type="ChEBI" id="CHEBI:18420"/>
    </ligand>
</feature>
<feature type="site" description="Substrate discrimination" evidence="1">
    <location>
        <position position="14"/>
    </location>
</feature>